<evidence type="ECO:0000255" key="1">
    <source>
        <dbReference type="PROSITE-ProRule" id="PRU00042"/>
    </source>
</evidence>
<evidence type="ECO:0000255" key="2">
    <source>
        <dbReference type="PROSITE-ProRule" id="PRU00187"/>
    </source>
</evidence>
<evidence type="ECO:0000256" key="3">
    <source>
        <dbReference type="SAM" id="MobiDB-lite"/>
    </source>
</evidence>
<evidence type="ECO:0000305" key="4"/>
<evidence type="ECO:0007744" key="5">
    <source>
    </source>
</evidence>
<gene>
    <name type="primary">ZSCAN12</name>
    <name type="synonym">KIAA0426</name>
    <name type="synonym">ZNF305</name>
    <name type="synonym">ZNF96</name>
</gene>
<name>ZSC12_HUMAN</name>
<dbReference type="EMBL" id="AB007886">
    <property type="protein sequence ID" value="BAA24856.2"/>
    <property type="status" value="ALT_INIT"/>
    <property type="molecule type" value="mRNA"/>
</dbReference>
<dbReference type="EMBL" id="AK289802">
    <property type="protein sequence ID" value="BAF82491.1"/>
    <property type="molecule type" value="mRNA"/>
</dbReference>
<dbReference type="EMBL" id="Z98745">
    <property type="status" value="NOT_ANNOTATED_CDS"/>
    <property type="molecule type" value="Genomic_DNA"/>
</dbReference>
<dbReference type="EMBL" id="CH471081">
    <property type="protein sequence ID" value="EAX03161.1"/>
    <property type="molecule type" value="Genomic_DNA"/>
</dbReference>
<dbReference type="EMBL" id="CH471081">
    <property type="protein sequence ID" value="EAX03162.1"/>
    <property type="molecule type" value="Genomic_DNA"/>
</dbReference>
<dbReference type="EMBL" id="BC041661">
    <property type="protein sequence ID" value="AAH41661.1"/>
    <property type="molecule type" value="mRNA"/>
</dbReference>
<dbReference type="CCDS" id="CCDS93876.1">
    <molecule id="O43309-1"/>
</dbReference>
<dbReference type="RefSeq" id="NP_001156863.1">
    <molecule id="O43309-1"/>
    <property type="nucleotide sequence ID" value="NM_001163391.2"/>
</dbReference>
<dbReference type="RefSeq" id="NP_001355053.1">
    <molecule id="O43309-1"/>
    <property type="nucleotide sequence ID" value="NM_001368124.1"/>
</dbReference>
<dbReference type="RefSeq" id="XP_011513316.1">
    <property type="nucleotide sequence ID" value="XM_011515014.2"/>
</dbReference>
<dbReference type="RefSeq" id="XP_011513317.1">
    <property type="nucleotide sequence ID" value="XM_011515015.2"/>
</dbReference>
<dbReference type="RefSeq" id="XP_016867017.1">
    <property type="nucleotide sequence ID" value="XM_017011528.1"/>
</dbReference>
<dbReference type="RefSeq" id="XP_047275550.1">
    <molecule id="O43309-1"/>
    <property type="nucleotide sequence ID" value="XM_047419594.1"/>
</dbReference>
<dbReference type="RefSeq" id="XP_047275551.1">
    <molecule id="O43309-1"/>
    <property type="nucleotide sequence ID" value="XM_047419595.1"/>
</dbReference>
<dbReference type="RefSeq" id="XP_047275552.1">
    <molecule id="O43309-2"/>
    <property type="nucleotide sequence ID" value="XM_047419596.1"/>
</dbReference>
<dbReference type="SMR" id="O43309"/>
<dbReference type="FunCoup" id="O43309">
    <property type="interactions" value="339"/>
</dbReference>
<dbReference type="IntAct" id="O43309">
    <property type="interactions" value="60"/>
</dbReference>
<dbReference type="MINT" id="O43309"/>
<dbReference type="STRING" id="9606.ENSP00000354305"/>
<dbReference type="GlyGen" id="O43309">
    <property type="glycosylation" value="2 sites, 1 N-linked glycan (1 site), 1 O-linked glycan (1 site)"/>
</dbReference>
<dbReference type="iPTMnet" id="O43309"/>
<dbReference type="PhosphoSitePlus" id="O43309"/>
<dbReference type="BioMuta" id="ZSCAN12"/>
<dbReference type="jPOST" id="O43309"/>
<dbReference type="MassIVE" id="O43309"/>
<dbReference type="PaxDb" id="9606-ENSP00000354305"/>
<dbReference type="PeptideAtlas" id="O43309"/>
<dbReference type="ProteomicsDB" id="48884"/>
<dbReference type="ABCD" id="O43309">
    <property type="antibodies" value="2 sequenced antibodies"/>
</dbReference>
<dbReference type="Antibodypedia" id="1809">
    <property type="antibodies" value="116 antibodies from 18 providers"/>
</dbReference>
<dbReference type="Ensembl" id="ENST00000361028.6">
    <molecule id="O43309-2"/>
    <property type="protein sequence ID" value="ENSP00000354305.1"/>
    <property type="gene ID" value="ENSG00000158691.16"/>
</dbReference>
<dbReference type="Ensembl" id="ENST00000396827.3">
    <molecule id="O43309-2"/>
    <property type="protein sequence ID" value="ENSP00000380039.3"/>
    <property type="gene ID" value="ENSG00000158691.16"/>
</dbReference>
<dbReference type="Ensembl" id="ENST00000684592.1">
    <molecule id="O43309-1"/>
    <property type="protein sequence ID" value="ENSP00000507347.1"/>
    <property type="gene ID" value="ENSG00000158691.16"/>
</dbReference>
<dbReference type="GeneID" id="9753"/>
<dbReference type="KEGG" id="hsa:9753"/>
<dbReference type="MANE-Select" id="ENST00000684592.1">
    <property type="protein sequence ID" value="ENSP00000507347.1"/>
    <property type="RefSeq nucleotide sequence ID" value="NM_001163391.2"/>
    <property type="RefSeq protein sequence ID" value="NP_001156863.1"/>
</dbReference>
<dbReference type="UCSC" id="uc063mll.1">
    <molecule id="O43309-1"/>
    <property type="organism name" value="human"/>
</dbReference>
<dbReference type="AGR" id="HGNC:13172"/>
<dbReference type="CTD" id="9753"/>
<dbReference type="DisGeNET" id="9753"/>
<dbReference type="GeneCards" id="ZSCAN12"/>
<dbReference type="HGNC" id="HGNC:13172">
    <property type="gene designation" value="ZSCAN12"/>
</dbReference>
<dbReference type="HPA" id="ENSG00000158691">
    <property type="expression patterns" value="Low tissue specificity"/>
</dbReference>
<dbReference type="MIM" id="603978">
    <property type="type" value="gene"/>
</dbReference>
<dbReference type="neXtProt" id="NX_O43309"/>
<dbReference type="OpenTargets" id="ENSG00000158691"/>
<dbReference type="PharmGKB" id="PA37744"/>
<dbReference type="VEuPathDB" id="HostDB:ENSG00000158691"/>
<dbReference type="eggNOG" id="KOG1721">
    <property type="taxonomic scope" value="Eukaryota"/>
</dbReference>
<dbReference type="GeneTree" id="ENSGT00940000163105"/>
<dbReference type="HOGENOM" id="CLU_002678_57_1_1"/>
<dbReference type="InParanoid" id="O43309"/>
<dbReference type="OMA" id="CHQCKEC"/>
<dbReference type="OrthoDB" id="6077919at2759"/>
<dbReference type="PAN-GO" id="O43309">
    <property type="GO annotations" value="3 GO annotations based on evolutionary models"/>
</dbReference>
<dbReference type="PhylomeDB" id="O43309"/>
<dbReference type="TreeFam" id="TF338146"/>
<dbReference type="PathwayCommons" id="O43309"/>
<dbReference type="SignaLink" id="O43309"/>
<dbReference type="CD-CODE" id="B5B9A610">
    <property type="entry name" value="PML body"/>
</dbReference>
<dbReference type="Pharos" id="O43309">
    <property type="development level" value="Tdark"/>
</dbReference>
<dbReference type="PRO" id="PR:O43309"/>
<dbReference type="Proteomes" id="UP000005640">
    <property type="component" value="Chromosome 6"/>
</dbReference>
<dbReference type="RNAct" id="O43309">
    <property type="molecule type" value="protein"/>
</dbReference>
<dbReference type="Bgee" id="ENSG00000158691">
    <property type="expression patterns" value="Expressed in primordial germ cell in gonad and 146 other cell types or tissues"/>
</dbReference>
<dbReference type="ExpressionAtlas" id="O43309">
    <property type="expression patterns" value="baseline and differential"/>
</dbReference>
<dbReference type="GO" id="GO:0005634">
    <property type="term" value="C:nucleus"/>
    <property type="evidence" value="ECO:0007669"/>
    <property type="project" value="UniProtKB-SubCell"/>
</dbReference>
<dbReference type="GO" id="GO:0000981">
    <property type="term" value="F:DNA-binding transcription factor activity, RNA polymerase II-specific"/>
    <property type="evidence" value="ECO:0000318"/>
    <property type="project" value="GO_Central"/>
</dbReference>
<dbReference type="GO" id="GO:0000978">
    <property type="term" value="F:RNA polymerase II cis-regulatory region sequence-specific DNA binding"/>
    <property type="evidence" value="ECO:0000318"/>
    <property type="project" value="GO_Central"/>
</dbReference>
<dbReference type="GO" id="GO:0008270">
    <property type="term" value="F:zinc ion binding"/>
    <property type="evidence" value="ECO:0007669"/>
    <property type="project" value="UniProtKB-KW"/>
</dbReference>
<dbReference type="GO" id="GO:0006357">
    <property type="term" value="P:regulation of transcription by RNA polymerase II"/>
    <property type="evidence" value="ECO:0000318"/>
    <property type="project" value="GO_Central"/>
</dbReference>
<dbReference type="CDD" id="cd07936">
    <property type="entry name" value="SCAN"/>
    <property type="match status" value="1"/>
</dbReference>
<dbReference type="FunFam" id="3.30.160.60:FF:000056">
    <property type="entry name" value="Zinc finger and SCAN domain-containing 20"/>
    <property type="match status" value="2"/>
</dbReference>
<dbReference type="FunFam" id="3.30.160.60:FF:001087">
    <property type="entry name" value="Zinc finger and SCAN domain-containing protein 26"/>
    <property type="match status" value="1"/>
</dbReference>
<dbReference type="FunFam" id="3.30.160.60:FF:000218">
    <property type="entry name" value="Zinc finger protein 10"/>
    <property type="match status" value="1"/>
</dbReference>
<dbReference type="FunFam" id="3.30.160.60:FF:000144">
    <property type="entry name" value="zinc finger protein 181 isoform X1"/>
    <property type="match status" value="1"/>
</dbReference>
<dbReference type="FunFam" id="1.10.4020.10:FF:000001">
    <property type="entry name" value="zinc finger protein 263 isoform X1"/>
    <property type="match status" value="1"/>
</dbReference>
<dbReference type="FunFam" id="3.30.160.60:FF:000970">
    <property type="entry name" value="zinc finger protein 333 isoform X2"/>
    <property type="match status" value="1"/>
</dbReference>
<dbReference type="FunFam" id="3.30.160.60:FF:002343">
    <property type="entry name" value="Zinc finger protein 33A"/>
    <property type="match status" value="1"/>
</dbReference>
<dbReference type="FunFam" id="3.30.160.60:FF:000016">
    <property type="entry name" value="zinc finger protein 37 homolog"/>
    <property type="match status" value="1"/>
</dbReference>
<dbReference type="FunFam" id="3.30.160.60:FF:001882">
    <property type="entry name" value="Zinc finger protein 473"/>
    <property type="match status" value="1"/>
</dbReference>
<dbReference type="FunFam" id="3.30.160.60:FF:000895">
    <property type="entry name" value="Zinc finger protein 597"/>
    <property type="match status" value="1"/>
</dbReference>
<dbReference type="FunFam" id="3.30.160.60:FF:000070">
    <property type="entry name" value="zinc finger protein 689 isoform X1"/>
    <property type="match status" value="1"/>
</dbReference>
<dbReference type="FunFam" id="3.30.160.60:FF:000330">
    <property type="entry name" value="Zinc finger with KRAB and SCAN domains 1"/>
    <property type="match status" value="1"/>
</dbReference>
<dbReference type="Gene3D" id="3.30.160.60">
    <property type="entry name" value="Classic Zinc Finger"/>
    <property type="match status" value="12"/>
</dbReference>
<dbReference type="Gene3D" id="1.10.4020.10">
    <property type="entry name" value="DNA breaking-rejoining enzymes"/>
    <property type="match status" value="1"/>
</dbReference>
<dbReference type="InterPro" id="IPR050752">
    <property type="entry name" value="C2H2-ZF_domain"/>
</dbReference>
<dbReference type="InterPro" id="IPR003309">
    <property type="entry name" value="SCAN_dom"/>
</dbReference>
<dbReference type="InterPro" id="IPR038269">
    <property type="entry name" value="SCAN_sf"/>
</dbReference>
<dbReference type="InterPro" id="IPR036236">
    <property type="entry name" value="Znf_C2H2_sf"/>
</dbReference>
<dbReference type="InterPro" id="IPR013087">
    <property type="entry name" value="Znf_C2H2_type"/>
</dbReference>
<dbReference type="PANTHER" id="PTHR24384">
    <property type="entry name" value="FINGER PUTATIVE TRANSCRIPTION FACTOR FAMILY-RELATED"/>
    <property type="match status" value="1"/>
</dbReference>
<dbReference type="PANTHER" id="PTHR24384:SF246">
    <property type="entry name" value="GENE, 19965-RELATED"/>
    <property type="match status" value="1"/>
</dbReference>
<dbReference type="Pfam" id="PF02023">
    <property type="entry name" value="SCAN"/>
    <property type="match status" value="1"/>
</dbReference>
<dbReference type="Pfam" id="PF00096">
    <property type="entry name" value="zf-C2H2"/>
    <property type="match status" value="12"/>
</dbReference>
<dbReference type="SMART" id="SM00431">
    <property type="entry name" value="SCAN"/>
    <property type="match status" value="1"/>
</dbReference>
<dbReference type="SMART" id="SM00355">
    <property type="entry name" value="ZnF_C2H2"/>
    <property type="match status" value="12"/>
</dbReference>
<dbReference type="SUPFAM" id="SSF57667">
    <property type="entry name" value="beta-beta-alpha zinc fingers"/>
    <property type="match status" value="7"/>
</dbReference>
<dbReference type="SUPFAM" id="SSF47353">
    <property type="entry name" value="Retrovirus capsid dimerization domain-like"/>
    <property type="match status" value="1"/>
</dbReference>
<dbReference type="PROSITE" id="PS50804">
    <property type="entry name" value="SCAN_BOX"/>
    <property type="match status" value="1"/>
</dbReference>
<dbReference type="PROSITE" id="PS00028">
    <property type="entry name" value="ZINC_FINGER_C2H2_1"/>
    <property type="match status" value="11"/>
</dbReference>
<dbReference type="PROSITE" id="PS50157">
    <property type="entry name" value="ZINC_FINGER_C2H2_2"/>
    <property type="match status" value="12"/>
</dbReference>
<organism>
    <name type="scientific">Homo sapiens</name>
    <name type="common">Human</name>
    <dbReference type="NCBI Taxonomy" id="9606"/>
    <lineage>
        <taxon>Eukaryota</taxon>
        <taxon>Metazoa</taxon>
        <taxon>Chordata</taxon>
        <taxon>Craniata</taxon>
        <taxon>Vertebrata</taxon>
        <taxon>Euteleostomi</taxon>
        <taxon>Mammalia</taxon>
        <taxon>Eutheria</taxon>
        <taxon>Euarchontoglires</taxon>
        <taxon>Primates</taxon>
        <taxon>Haplorrhini</taxon>
        <taxon>Catarrhini</taxon>
        <taxon>Hominidae</taxon>
        <taxon>Homo</taxon>
    </lineage>
</organism>
<feature type="chain" id="PRO_0000047403" description="Zinc finger and SCAN domain-containing protein 12">
    <location>
        <begin position="1"/>
        <end position="611"/>
    </location>
</feature>
<feature type="domain" description="SCAN box" evidence="2">
    <location>
        <begin position="46"/>
        <end position="128"/>
    </location>
</feature>
<feature type="zinc finger region" description="C2H2-type 1" evidence="1">
    <location>
        <begin position="274"/>
        <end position="296"/>
    </location>
</feature>
<feature type="zinc finger region" description="C2H2-type 2" evidence="1">
    <location>
        <begin position="302"/>
        <end position="324"/>
    </location>
</feature>
<feature type="zinc finger region" description="C2H2-type 3" evidence="1">
    <location>
        <begin position="330"/>
        <end position="352"/>
    </location>
</feature>
<feature type="zinc finger region" description="C2H2-type 4" evidence="1">
    <location>
        <begin position="358"/>
        <end position="380"/>
    </location>
</feature>
<feature type="zinc finger region" description="C2H2-type 5" evidence="1">
    <location>
        <begin position="386"/>
        <end position="408"/>
    </location>
</feature>
<feature type="zinc finger region" description="C2H2-type 6" evidence="1">
    <location>
        <begin position="414"/>
        <end position="436"/>
    </location>
</feature>
<feature type="zinc finger region" description="C2H2-type 7" evidence="1">
    <location>
        <begin position="442"/>
        <end position="463"/>
    </location>
</feature>
<feature type="zinc finger region" description="C2H2-type 8" evidence="1">
    <location>
        <begin position="469"/>
        <end position="491"/>
    </location>
</feature>
<feature type="zinc finger region" description="C2H2-type 9" evidence="1">
    <location>
        <begin position="497"/>
        <end position="519"/>
    </location>
</feature>
<feature type="zinc finger region" description="C2H2-type 10" evidence="1">
    <location>
        <begin position="525"/>
        <end position="547"/>
    </location>
</feature>
<feature type="zinc finger region" description="C2H2-type 11" evidence="1">
    <location>
        <begin position="553"/>
        <end position="575"/>
    </location>
</feature>
<feature type="zinc finger region" description="C2H2-type 12" evidence="1">
    <location>
        <begin position="581"/>
        <end position="603"/>
    </location>
</feature>
<feature type="region of interest" description="Disordered" evidence="3">
    <location>
        <begin position="154"/>
        <end position="175"/>
    </location>
</feature>
<feature type="region of interest" description="Disordered" evidence="3">
    <location>
        <begin position="198"/>
        <end position="264"/>
    </location>
</feature>
<feature type="compositionally biased region" description="Basic and acidic residues" evidence="3">
    <location>
        <begin position="203"/>
        <end position="230"/>
    </location>
</feature>
<feature type="cross-link" description="Glycyl lysine isopeptide (Lys-Gly) (interchain with G-Cter in SUMO2)" evidence="5">
    <location>
        <position position="20"/>
    </location>
</feature>
<feature type="cross-link" description="Glycyl lysine isopeptide (Lys-Gly) (interchain with G-Cter in SUMO2)" evidence="5">
    <location>
        <position position="25"/>
    </location>
</feature>
<feature type="cross-link" description="Glycyl lysine isopeptide (Lys-Gly) (interchain with G-Cter in SUMO2)" evidence="5">
    <location>
        <position position="196"/>
    </location>
</feature>
<feature type="splice variant" id="VSP_061227" description="In isoform 2." evidence="4">
    <original>SDLSKHQRIHNRRGTYVCKECGKSFRQNSALTQHQTIHKGEKSVSV</original>
    <variation>KKTSYKEILLKNHSEPQAGVNLLLSSLIPEWQSCFRRDL</variation>
    <location>
        <begin position="566"/>
        <end position="611"/>
    </location>
</feature>
<feature type="sequence conflict" description="In Ref. 2; BAF82491." evidence="4" ref="2">
    <original>N</original>
    <variation>D</variation>
    <location>
        <position position="392"/>
    </location>
</feature>
<protein>
    <recommendedName>
        <fullName>Zinc finger and SCAN domain-containing protein 12</fullName>
    </recommendedName>
    <alternativeName>
        <fullName>Zinc finger protein 305</fullName>
    </alternativeName>
    <alternativeName>
        <fullName>Zinc finger protein 96</fullName>
    </alternativeName>
</protein>
<keyword id="KW-0025">Alternative splicing</keyword>
<keyword id="KW-0238">DNA-binding</keyword>
<keyword id="KW-1017">Isopeptide bond</keyword>
<keyword id="KW-0479">Metal-binding</keyword>
<keyword id="KW-0539">Nucleus</keyword>
<keyword id="KW-1267">Proteomics identification</keyword>
<keyword id="KW-1185">Reference proteome</keyword>
<keyword id="KW-0677">Repeat</keyword>
<keyword id="KW-0804">Transcription</keyword>
<keyword id="KW-0805">Transcription regulation</keyword>
<keyword id="KW-0832">Ubl conjugation</keyword>
<keyword id="KW-0862">Zinc</keyword>
<keyword id="KW-0863">Zinc-finger</keyword>
<accession>O43309</accession>
<accession>A0A024RCI2</accession>
<accession>A8K187</accession>
<accession>O43724</accession>
<proteinExistence type="evidence at protein level"/>
<reference key="1">
    <citation type="journal article" date="1997" name="DNA Res.">
        <title>Prediction of the coding sequences of unidentified human genes. VIII. 78 new cDNA clones from brain which code for large proteins in vitro.</title>
        <authorList>
            <person name="Ishikawa K."/>
            <person name="Nagase T."/>
            <person name="Nakajima D."/>
            <person name="Seki N."/>
            <person name="Ohira M."/>
            <person name="Miyajima N."/>
            <person name="Tanaka A."/>
            <person name="Kotani H."/>
            <person name="Nomura N."/>
            <person name="Ohara O."/>
        </authorList>
    </citation>
    <scope>NUCLEOTIDE SEQUENCE [LARGE SCALE MRNA] (ISOFORM 2)</scope>
    <source>
        <tissue>Brain</tissue>
    </source>
</reference>
<reference key="2">
    <citation type="journal article" date="2004" name="Nat. Genet.">
        <title>Complete sequencing and characterization of 21,243 full-length human cDNAs.</title>
        <authorList>
            <person name="Ota T."/>
            <person name="Suzuki Y."/>
            <person name="Nishikawa T."/>
            <person name="Otsuki T."/>
            <person name="Sugiyama T."/>
            <person name="Irie R."/>
            <person name="Wakamatsu A."/>
            <person name="Hayashi K."/>
            <person name="Sato H."/>
            <person name="Nagai K."/>
            <person name="Kimura K."/>
            <person name="Makita H."/>
            <person name="Sekine M."/>
            <person name="Obayashi M."/>
            <person name="Nishi T."/>
            <person name="Shibahara T."/>
            <person name="Tanaka T."/>
            <person name="Ishii S."/>
            <person name="Yamamoto J."/>
            <person name="Saito K."/>
            <person name="Kawai Y."/>
            <person name="Isono Y."/>
            <person name="Nakamura Y."/>
            <person name="Nagahari K."/>
            <person name="Murakami K."/>
            <person name="Yasuda T."/>
            <person name="Iwayanagi T."/>
            <person name="Wagatsuma M."/>
            <person name="Shiratori A."/>
            <person name="Sudo H."/>
            <person name="Hosoiri T."/>
            <person name="Kaku Y."/>
            <person name="Kodaira H."/>
            <person name="Kondo H."/>
            <person name="Sugawara M."/>
            <person name="Takahashi M."/>
            <person name="Kanda K."/>
            <person name="Yokoi T."/>
            <person name="Furuya T."/>
            <person name="Kikkawa E."/>
            <person name="Omura Y."/>
            <person name="Abe K."/>
            <person name="Kamihara K."/>
            <person name="Katsuta N."/>
            <person name="Sato K."/>
            <person name="Tanikawa M."/>
            <person name="Yamazaki M."/>
            <person name="Ninomiya K."/>
            <person name="Ishibashi T."/>
            <person name="Yamashita H."/>
            <person name="Murakawa K."/>
            <person name="Fujimori K."/>
            <person name="Tanai H."/>
            <person name="Kimata M."/>
            <person name="Watanabe M."/>
            <person name="Hiraoka S."/>
            <person name="Chiba Y."/>
            <person name="Ishida S."/>
            <person name="Ono Y."/>
            <person name="Takiguchi S."/>
            <person name="Watanabe S."/>
            <person name="Yosida M."/>
            <person name="Hotuta T."/>
            <person name="Kusano J."/>
            <person name="Kanehori K."/>
            <person name="Takahashi-Fujii A."/>
            <person name="Hara H."/>
            <person name="Tanase T.-O."/>
            <person name="Nomura Y."/>
            <person name="Togiya S."/>
            <person name="Komai F."/>
            <person name="Hara R."/>
            <person name="Takeuchi K."/>
            <person name="Arita M."/>
            <person name="Imose N."/>
            <person name="Musashino K."/>
            <person name="Yuuki H."/>
            <person name="Oshima A."/>
            <person name="Sasaki N."/>
            <person name="Aotsuka S."/>
            <person name="Yoshikawa Y."/>
            <person name="Matsunawa H."/>
            <person name="Ichihara T."/>
            <person name="Shiohata N."/>
            <person name="Sano S."/>
            <person name="Moriya S."/>
            <person name="Momiyama H."/>
            <person name="Satoh N."/>
            <person name="Takami S."/>
            <person name="Terashima Y."/>
            <person name="Suzuki O."/>
            <person name="Nakagawa S."/>
            <person name="Senoh A."/>
            <person name="Mizoguchi H."/>
            <person name="Goto Y."/>
            <person name="Shimizu F."/>
            <person name="Wakebe H."/>
            <person name="Hishigaki H."/>
            <person name="Watanabe T."/>
            <person name="Sugiyama A."/>
            <person name="Takemoto M."/>
            <person name="Kawakami B."/>
            <person name="Yamazaki M."/>
            <person name="Watanabe K."/>
            <person name="Kumagai A."/>
            <person name="Itakura S."/>
            <person name="Fukuzumi Y."/>
            <person name="Fujimori Y."/>
            <person name="Komiyama M."/>
            <person name="Tashiro H."/>
            <person name="Tanigami A."/>
            <person name="Fujiwara T."/>
            <person name="Ono T."/>
            <person name="Yamada K."/>
            <person name="Fujii Y."/>
            <person name="Ozaki K."/>
            <person name="Hirao M."/>
            <person name="Ohmori Y."/>
            <person name="Kawabata A."/>
            <person name="Hikiji T."/>
            <person name="Kobatake N."/>
            <person name="Inagaki H."/>
            <person name="Ikema Y."/>
            <person name="Okamoto S."/>
            <person name="Okitani R."/>
            <person name="Kawakami T."/>
            <person name="Noguchi S."/>
            <person name="Itoh T."/>
            <person name="Shigeta K."/>
            <person name="Senba T."/>
            <person name="Matsumura K."/>
            <person name="Nakajima Y."/>
            <person name="Mizuno T."/>
            <person name="Morinaga M."/>
            <person name="Sasaki M."/>
            <person name="Togashi T."/>
            <person name="Oyama M."/>
            <person name="Hata H."/>
            <person name="Watanabe M."/>
            <person name="Komatsu T."/>
            <person name="Mizushima-Sugano J."/>
            <person name="Satoh T."/>
            <person name="Shirai Y."/>
            <person name="Takahashi Y."/>
            <person name="Nakagawa K."/>
            <person name="Okumura K."/>
            <person name="Nagase T."/>
            <person name="Nomura N."/>
            <person name="Kikuchi H."/>
            <person name="Masuho Y."/>
            <person name="Yamashita R."/>
            <person name="Nakai K."/>
            <person name="Yada T."/>
            <person name="Nakamura Y."/>
            <person name="Ohara O."/>
            <person name="Isogai T."/>
            <person name="Sugano S."/>
        </authorList>
    </citation>
    <scope>NUCLEOTIDE SEQUENCE [LARGE SCALE MRNA] (ISOFORM 2)</scope>
    <source>
        <tissue>Brain</tissue>
    </source>
</reference>
<reference key="3">
    <citation type="journal article" date="2003" name="Nature">
        <title>The DNA sequence and analysis of human chromosome 6.</title>
        <authorList>
            <person name="Mungall A.J."/>
            <person name="Palmer S.A."/>
            <person name="Sims S.K."/>
            <person name="Edwards C.A."/>
            <person name="Ashurst J.L."/>
            <person name="Wilming L."/>
            <person name="Jones M.C."/>
            <person name="Horton R."/>
            <person name="Hunt S.E."/>
            <person name="Scott C.E."/>
            <person name="Gilbert J.G.R."/>
            <person name="Clamp M.E."/>
            <person name="Bethel G."/>
            <person name="Milne S."/>
            <person name="Ainscough R."/>
            <person name="Almeida J.P."/>
            <person name="Ambrose K.D."/>
            <person name="Andrews T.D."/>
            <person name="Ashwell R.I.S."/>
            <person name="Babbage A.K."/>
            <person name="Bagguley C.L."/>
            <person name="Bailey J."/>
            <person name="Banerjee R."/>
            <person name="Barker D.J."/>
            <person name="Barlow K.F."/>
            <person name="Bates K."/>
            <person name="Beare D.M."/>
            <person name="Beasley H."/>
            <person name="Beasley O."/>
            <person name="Bird C.P."/>
            <person name="Blakey S.E."/>
            <person name="Bray-Allen S."/>
            <person name="Brook J."/>
            <person name="Brown A.J."/>
            <person name="Brown J.Y."/>
            <person name="Burford D.C."/>
            <person name="Burrill W."/>
            <person name="Burton J."/>
            <person name="Carder C."/>
            <person name="Carter N.P."/>
            <person name="Chapman J.C."/>
            <person name="Clark S.Y."/>
            <person name="Clark G."/>
            <person name="Clee C.M."/>
            <person name="Clegg S."/>
            <person name="Cobley V."/>
            <person name="Collier R.E."/>
            <person name="Collins J.E."/>
            <person name="Colman L.K."/>
            <person name="Corby N.R."/>
            <person name="Coville G.J."/>
            <person name="Culley K.M."/>
            <person name="Dhami P."/>
            <person name="Davies J."/>
            <person name="Dunn M."/>
            <person name="Earthrowl M.E."/>
            <person name="Ellington A.E."/>
            <person name="Evans K.A."/>
            <person name="Faulkner L."/>
            <person name="Francis M.D."/>
            <person name="Frankish A."/>
            <person name="Frankland J."/>
            <person name="French L."/>
            <person name="Garner P."/>
            <person name="Garnett J."/>
            <person name="Ghori M.J."/>
            <person name="Gilby L.M."/>
            <person name="Gillson C.J."/>
            <person name="Glithero R.J."/>
            <person name="Grafham D.V."/>
            <person name="Grant M."/>
            <person name="Gribble S."/>
            <person name="Griffiths C."/>
            <person name="Griffiths M.N.D."/>
            <person name="Hall R."/>
            <person name="Halls K.S."/>
            <person name="Hammond S."/>
            <person name="Harley J.L."/>
            <person name="Hart E.A."/>
            <person name="Heath P.D."/>
            <person name="Heathcott R."/>
            <person name="Holmes S.J."/>
            <person name="Howden P.J."/>
            <person name="Howe K.L."/>
            <person name="Howell G.R."/>
            <person name="Huckle E."/>
            <person name="Humphray S.J."/>
            <person name="Humphries M.D."/>
            <person name="Hunt A.R."/>
            <person name="Johnson C.M."/>
            <person name="Joy A.A."/>
            <person name="Kay M."/>
            <person name="Keenan S.J."/>
            <person name="Kimberley A.M."/>
            <person name="King A."/>
            <person name="Laird G.K."/>
            <person name="Langford C."/>
            <person name="Lawlor S."/>
            <person name="Leongamornlert D.A."/>
            <person name="Leversha M."/>
            <person name="Lloyd C.R."/>
            <person name="Lloyd D.M."/>
            <person name="Loveland J.E."/>
            <person name="Lovell J."/>
            <person name="Martin S."/>
            <person name="Mashreghi-Mohammadi M."/>
            <person name="Maslen G.L."/>
            <person name="Matthews L."/>
            <person name="McCann O.T."/>
            <person name="McLaren S.J."/>
            <person name="McLay K."/>
            <person name="McMurray A."/>
            <person name="Moore M.J.F."/>
            <person name="Mullikin J.C."/>
            <person name="Niblett D."/>
            <person name="Nickerson T."/>
            <person name="Novik K.L."/>
            <person name="Oliver K."/>
            <person name="Overton-Larty E.K."/>
            <person name="Parker A."/>
            <person name="Patel R."/>
            <person name="Pearce A.V."/>
            <person name="Peck A.I."/>
            <person name="Phillimore B.J.C.T."/>
            <person name="Phillips S."/>
            <person name="Plumb R.W."/>
            <person name="Porter K.M."/>
            <person name="Ramsey Y."/>
            <person name="Ranby S.A."/>
            <person name="Rice C.M."/>
            <person name="Ross M.T."/>
            <person name="Searle S.M."/>
            <person name="Sehra H.K."/>
            <person name="Sheridan E."/>
            <person name="Skuce C.D."/>
            <person name="Smith S."/>
            <person name="Smith M."/>
            <person name="Spraggon L."/>
            <person name="Squares S.L."/>
            <person name="Steward C.A."/>
            <person name="Sycamore N."/>
            <person name="Tamlyn-Hall G."/>
            <person name="Tester J."/>
            <person name="Theaker A.J."/>
            <person name="Thomas D.W."/>
            <person name="Thorpe A."/>
            <person name="Tracey A."/>
            <person name="Tromans A."/>
            <person name="Tubby B."/>
            <person name="Wall M."/>
            <person name="Wallis J.M."/>
            <person name="West A.P."/>
            <person name="White S.S."/>
            <person name="Whitehead S.L."/>
            <person name="Whittaker H."/>
            <person name="Wild A."/>
            <person name="Willey D.J."/>
            <person name="Wilmer T.E."/>
            <person name="Wood J.M."/>
            <person name="Wray P.W."/>
            <person name="Wyatt J.C."/>
            <person name="Young L."/>
            <person name="Younger R.M."/>
            <person name="Bentley D.R."/>
            <person name="Coulson A."/>
            <person name="Durbin R.M."/>
            <person name="Hubbard T."/>
            <person name="Sulston J.E."/>
            <person name="Dunham I."/>
            <person name="Rogers J."/>
            <person name="Beck S."/>
        </authorList>
    </citation>
    <scope>NUCLEOTIDE SEQUENCE [LARGE SCALE GENOMIC DNA]</scope>
</reference>
<reference key="4">
    <citation type="submission" date="2005-07" db="EMBL/GenBank/DDBJ databases">
        <authorList>
            <person name="Mural R.J."/>
            <person name="Istrail S."/>
            <person name="Sutton G.G."/>
            <person name="Florea L."/>
            <person name="Halpern A.L."/>
            <person name="Mobarry C.M."/>
            <person name="Lippert R."/>
            <person name="Walenz B."/>
            <person name="Shatkay H."/>
            <person name="Dew I."/>
            <person name="Miller J.R."/>
            <person name="Flanigan M.J."/>
            <person name="Edwards N.J."/>
            <person name="Bolanos R."/>
            <person name="Fasulo D."/>
            <person name="Halldorsson B.V."/>
            <person name="Hannenhalli S."/>
            <person name="Turner R."/>
            <person name="Yooseph S."/>
            <person name="Lu F."/>
            <person name="Nusskern D.R."/>
            <person name="Shue B.C."/>
            <person name="Zheng X.H."/>
            <person name="Zhong F."/>
            <person name="Delcher A.L."/>
            <person name="Huson D.H."/>
            <person name="Kravitz S.A."/>
            <person name="Mouchard L."/>
            <person name="Reinert K."/>
            <person name="Remington K.A."/>
            <person name="Clark A.G."/>
            <person name="Waterman M.S."/>
            <person name="Eichler E.E."/>
            <person name="Adams M.D."/>
            <person name="Hunkapiller M.W."/>
            <person name="Myers E.W."/>
            <person name="Venter J.C."/>
        </authorList>
    </citation>
    <scope>NUCLEOTIDE SEQUENCE [LARGE SCALE GENOMIC DNA]</scope>
</reference>
<reference key="5">
    <citation type="journal article" date="2004" name="Genome Res.">
        <title>The status, quality, and expansion of the NIH full-length cDNA project: the Mammalian Gene Collection (MGC).</title>
        <authorList>
            <consortium name="The MGC Project Team"/>
        </authorList>
    </citation>
    <scope>NUCLEOTIDE SEQUENCE [LARGE SCALE MRNA] (ISOFORM 2)</scope>
    <source>
        <tissue>Skin</tissue>
    </source>
</reference>
<reference key="6">
    <citation type="journal article" date="2017" name="Nat. Struct. Mol. Biol.">
        <title>Site-specific mapping of the human SUMO proteome reveals co-modification with phosphorylation.</title>
        <authorList>
            <person name="Hendriks I.A."/>
            <person name="Lyon D."/>
            <person name="Young C."/>
            <person name="Jensen L.J."/>
            <person name="Vertegaal A.C."/>
            <person name="Nielsen M.L."/>
        </authorList>
    </citation>
    <scope>SUMOYLATION [LARGE SCALE ANALYSIS] AT LYS-20; LYS-25 AND LYS-196</scope>
    <scope>IDENTIFICATION BY MASS SPECTROMETRY [LARGE SCALE ANALYSIS]</scope>
</reference>
<comment type="function">
    <text>May be involved in transcriptional regulation.</text>
</comment>
<comment type="interaction">
    <interactant intactId="EBI-1210440">
        <id>O43309</id>
    </interactant>
    <interactant intactId="EBI-11975051">
        <id>Q8TD16-2</id>
        <label>BICD2</label>
    </interactant>
    <organismsDiffer>false</organismsDiffer>
    <experiments>3</experiments>
</comment>
<comment type="interaction">
    <interactant intactId="EBI-1210440">
        <id>O43309</id>
    </interactant>
    <interactant intactId="EBI-1003700">
        <id>Q9H3R5</id>
        <label>CENPH</label>
    </interactant>
    <organismsDiffer>false</organismsDiffer>
    <experiments>3</experiments>
</comment>
<comment type="interaction">
    <interactant intactId="EBI-1210440">
        <id>O43309</id>
    </interactant>
    <interactant intactId="EBI-739624">
        <id>Q8NHQ1</id>
        <label>CEP70</label>
    </interactant>
    <organismsDiffer>false</organismsDiffer>
    <experiments>3</experiments>
</comment>
<comment type="interaction">
    <interactant intactId="EBI-1210440">
        <id>O43309</id>
    </interactant>
    <interactant intactId="EBI-719941">
        <id>Q3B820</id>
        <label>FAM161A</label>
    </interactant>
    <organismsDiffer>false</organismsDiffer>
    <experiments>3</experiments>
</comment>
<comment type="interaction">
    <interactant intactId="EBI-1210440">
        <id>O43309</id>
    </interactant>
    <interactant intactId="EBI-10171774">
        <id>P60410</id>
        <label>KRTAP10-8</label>
    </interactant>
    <organismsDiffer>false</organismsDiffer>
    <experiments>3</experiments>
</comment>
<comment type="interaction">
    <interactant intactId="EBI-1210440">
        <id>O43309</id>
    </interactant>
    <interactant intactId="EBI-351935">
        <id>P02545</id>
        <label>LMNA</label>
    </interactant>
    <organismsDiffer>false</organismsDiffer>
    <experiments>3</experiments>
</comment>
<comment type="interaction">
    <interactant intactId="EBI-1210440">
        <id>O43309</id>
    </interactant>
    <interactant intactId="EBI-10172526">
        <id>Q9UJV3-2</id>
        <label>MID2</label>
    </interactant>
    <organismsDiffer>false</organismsDiffer>
    <experiments>6</experiments>
</comment>
<comment type="interaction">
    <interactant intactId="EBI-1210440">
        <id>O43309</id>
    </interactant>
    <interactant intactId="EBI-742948">
        <id>Q5JR59</id>
        <label>MTUS2</label>
    </interactant>
    <organismsDiffer>false</organismsDiffer>
    <experiments>3</experiments>
</comment>
<comment type="interaction">
    <interactant intactId="EBI-1210440">
        <id>O43309</id>
    </interactant>
    <interactant intactId="EBI-10290053">
        <id>Q96JS3</id>
        <label>PGBD1</label>
    </interactant>
    <organismsDiffer>false</organismsDiffer>
    <experiments>3</experiments>
</comment>
<comment type="interaction">
    <interactant intactId="EBI-1210440">
        <id>O43309</id>
    </interactant>
    <interactant intactId="EBI-296739">
        <id>P63244</id>
        <label>RACK1</label>
    </interactant>
    <organismsDiffer>false</organismsDiffer>
    <experiments>3</experiments>
</comment>
<comment type="interaction">
    <interactant intactId="EBI-1210440">
        <id>O43309</id>
    </interactant>
    <interactant intactId="EBI-745846">
        <id>P57086</id>
        <label>SCAND1</label>
    </interactant>
    <organismsDiffer>false</organismsDiffer>
    <experiments>5</experiments>
</comment>
<comment type="interaction">
    <interactant intactId="EBI-1210440">
        <id>O43309</id>
    </interactant>
    <interactant intactId="EBI-5235340">
        <id>Q7Z699</id>
        <label>SPRED1</label>
    </interactant>
    <organismsDiffer>false</organismsDiffer>
    <experiments>3</experiments>
</comment>
<comment type="interaction">
    <interactant intactId="EBI-1210440">
        <id>O43309</id>
    </interactant>
    <interactant intactId="EBI-593303">
        <id>P78362</id>
        <label>SRPK2</label>
    </interactant>
    <organismsDiffer>false</organismsDiffer>
    <experiments>3</experiments>
</comment>
<comment type="interaction">
    <interactant intactId="EBI-1210440">
        <id>O43309</id>
    </interactant>
    <interactant intactId="EBI-2212028">
        <id>Q9Y2D8</id>
        <label>SSX2IP</label>
    </interactant>
    <organismsDiffer>false</organismsDiffer>
    <experiments>3</experiments>
</comment>
<comment type="interaction">
    <interactant intactId="EBI-1210440">
        <id>O43309</id>
    </interactant>
    <interactant intactId="EBI-1105213">
        <id>Q9UBB9</id>
        <label>TFIP11</label>
    </interactant>
    <organismsDiffer>false</organismsDiffer>
    <experiments>4</experiments>
</comment>
<comment type="interaction">
    <interactant intactId="EBI-1210440">
        <id>O43309</id>
    </interactant>
    <interactant intactId="EBI-12047495">
        <id>P98155-2</id>
        <label>VLDLR</label>
    </interactant>
    <organismsDiffer>false</organismsDiffer>
    <experiments>3</experiments>
</comment>
<comment type="interaction">
    <interactant intactId="EBI-1210440">
        <id>O43309</id>
    </interactant>
    <interactant intactId="EBI-1043891">
        <id>O75436</id>
        <label>VPS26A</label>
    </interactant>
    <organismsDiffer>false</organismsDiffer>
    <experiments>3</experiments>
</comment>
<comment type="interaction">
    <interactant intactId="EBI-1210440">
        <id>O43309</id>
    </interactant>
    <interactant intactId="EBI-743851">
        <id>Q9P0L1</id>
        <label>ZKSCAN7</label>
    </interactant>
    <organismsDiffer>false</organismsDiffer>
    <experiments>3</experiments>
</comment>
<comment type="interaction">
    <interactant intactId="EBI-1210440">
        <id>O43309</id>
    </interactant>
    <interactant intactId="EBI-707773">
        <id>P17028</id>
        <label>ZNF24</label>
    </interactant>
    <organismsDiffer>false</organismsDiffer>
    <experiments>3</experiments>
</comment>
<comment type="interaction">
    <interactant intactId="EBI-1210440">
        <id>O43309</id>
    </interactant>
    <interactant intactId="EBI-11524467">
        <id>Q8NF99-2</id>
        <label>ZNF397</label>
    </interactant>
    <organismsDiffer>false</organismsDiffer>
    <experiments>3</experiments>
</comment>
<comment type="interaction">
    <interactant intactId="EBI-1210440">
        <id>O43309</id>
    </interactant>
    <interactant intactId="EBI-740232">
        <id>Q9NWS9-2</id>
        <label>ZNF446</label>
    </interactant>
    <organismsDiffer>false</organismsDiffer>
    <experiments>7</experiments>
</comment>
<comment type="interaction">
    <interactant intactId="EBI-1210440">
        <id>O43309</id>
    </interactant>
    <interactant intactId="EBI-751409">
        <id>Q8WTR7</id>
        <label>ZNF473</label>
    </interactant>
    <organismsDiffer>false</organismsDiffer>
    <experiments>3</experiments>
</comment>
<comment type="interaction">
    <interactant intactId="EBI-1210440">
        <id>O43309</id>
    </interactant>
    <interactant intactId="EBI-743906">
        <id>Q96IT1</id>
        <label>ZNF496</label>
    </interactant>
    <organismsDiffer>false</organismsDiffer>
    <experiments>3</experiments>
</comment>
<comment type="interaction">
    <interactant intactId="EBI-1210440">
        <id>O43309</id>
    </interactant>
    <interactant intactId="EBI-10281938">
        <id>Q9Y5A6</id>
        <label>ZSCAN21</label>
    </interactant>
    <organismsDiffer>false</organismsDiffer>
    <experiments>3</experiments>
</comment>
<comment type="interaction">
    <interactant intactId="EBI-1210440">
        <id>O43309</id>
    </interactant>
    <interactant intactId="EBI-739949">
        <id>Q9NX65</id>
        <label>ZSCAN32</label>
    </interactant>
    <organismsDiffer>false</organismsDiffer>
    <experiments>5</experiments>
</comment>
<comment type="subcellular location">
    <subcellularLocation>
        <location evidence="2">Nucleus</location>
    </subcellularLocation>
</comment>
<comment type="alternative products">
    <event type="alternative splicing"/>
    <isoform>
        <id>O43309-1</id>
        <name>1</name>
        <sequence type="displayed"/>
    </isoform>
    <isoform>
        <id>O43309-2</id>
        <name>2</name>
        <sequence type="described" ref="VSP_061227"/>
    </isoform>
</comment>
<comment type="similarity">
    <text evidence="4">Belongs to the krueppel C2H2-type zinc-finger protein family.</text>
</comment>
<comment type="sequence caution" evidence="4">
    <conflict type="erroneous initiation">
        <sequence resource="EMBL-CDS" id="BAA24856"/>
    </conflict>
    <text>Extended N-terminus.</text>
</comment>
<sequence length="611" mass="70960">MASTWAIQAHMDQDEPLEVKIEEEKYTTRQDWDLRKNNTHSREVFRQYFRQFCYQETSGPREALSRLRELCHQWLRPETHTKEQILELLVLEQFLTILPEELQAWVQEQHPESGEEVVTVLEDLERELDEPGEQVSVHTGEQEMFLQETVRLRKEGEPSMSLQSMKAQPKYESPELESQQEQVLDVETGNEYGNLKQEVSEEMEPHGKTSSKFENDMSKSARCGETREPEEITEEPSACSREDKQPTCDENGVSLTENSDHTEHQRICPGEESYGCDDCGKAFSQHSHLIEHQRIHTGDRPYKCEECGKAFRGRTVLIRHKIIHTGEKPYKCNECGKAFGRWSALNQHQRLHTGEKHYHCNDCGKAFSQKAGLFHHIKIHTRDKPYQCTQCNKSFSRRSILTQHQGVHTGAKPYECNECGKAFVYNSSLVSHQEIHHKEKCYQCKECGKSFSQSGLIQHQRIHTGEKPYKCDVCEKAFIQRTSLTEHQRIHTGERPYKCDKCGKAFTQRSVLTEHQRIHTGERPYKCDECGNAFRGITSLIQHQRIHTGEKPYQCDECGKAFRQRSDLSKHQRIHNRRGTYVCKECGKSFRQNSALTQHQTIHKGEKSVSV</sequence>